<comment type="function">
    <text evidence="1">Catalytic subunit of the tagatose-1,6-bisphosphate aldolase GatYZ, which catalyzes the reversible aldol condensation of dihydroxyacetone phosphate (DHAP or glycerone-phosphate) with glyceraldehyde 3-phosphate (G3P) to produce tagatose 1,6-bisphosphate (TBP). Requires GatZ subunit for full activity and stability. Is involved in the catabolism of galactitol.</text>
</comment>
<comment type="catalytic activity">
    <reaction evidence="1">
        <text>D-tagatofuranose 1,6-bisphosphate = D-glyceraldehyde 3-phosphate + dihydroxyacetone phosphate</text>
        <dbReference type="Rhea" id="RHEA:22948"/>
        <dbReference type="ChEBI" id="CHEBI:57642"/>
        <dbReference type="ChEBI" id="CHEBI:58694"/>
        <dbReference type="ChEBI" id="CHEBI:59776"/>
        <dbReference type="EC" id="4.1.2.40"/>
    </reaction>
</comment>
<comment type="cofactor">
    <cofactor evidence="1">
        <name>Zn(2+)</name>
        <dbReference type="ChEBI" id="CHEBI:29105"/>
    </cofactor>
    <text evidence="1">Binds 1 zinc ion per subunit.</text>
</comment>
<comment type="pathway">
    <text evidence="1">Carbohydrate metabolism; D-tagatose 6-phosphate degradation; D-glyceraldehyde 3-phosphate and glycerone phosphate from D-tagatose 6-phosphate: step 2/2.</text>
</comment>
<comment type="subunit">
    <text evidence="1">Forms a complex with GatZ.</text>
</comment>
<comment type="similarity">
    <text evidence="1">Belongs to the class II fructose-bisphosphate aldolase family. TagBP aldolase GatY subfamily.</text>
</comment>
<gene>
    <name evidence="1" type="primary">gatY</name>
    <name type="ordered locus">SEN3091</name>
</gene>
<protein>
    <recommendedName>
        <fullName evidence="1">D-tagatose-1,6-bisphosphate aldolase subunit GatY</fullName>
        <shortName evidence="1">TBPA</shortName>
        <shortName evidence="1">TagBP aldolase</shortName>
        <ecNumber evidence="1">4.1.2.40</ecNumber>
    </recommendedName>
    <alternativeName>
        <fullName evidence="1">D-tagatose-bisphosphate aldolase class II</fullName>
    </alternativeName>
    <alternativeName>
        <fullName evidence="1">Tagatose-bisphosphate aldolase</fullName>
    </alternativeName>
</protein>
<name>GATY_SALEP</name>
<evidence type="ECO:0000255" key="1">
    <source>
        <dbReference type="HAMAP-Rule" id="MF_01294"/>
    </source>
</evidence>
<sequence>MFIISGRTMLKKAQQEGYAVPAFNIHNLETLQVVVETAAELRSPLIVAGTPGTFSYAGVGNIVAIAAELAKSWNHPLAVHLDHHEKLADIKMKVAAGVRSVMIDGSHFPFADNIALVKSVVDYCHRYDVSVEAELGRLGGQEDDLIVDGKDALYTHPEQAREFVEKTGIDSLAIAIGTAHGLYTAEPKLDFERLTEIRQRVDVPLVLHGASGLPTRDITRAISLGICKVNVATELKIAFSGALKNYLTQHAEASDPRHYMIPAKAAMKEVVRKVIADCGCEGKL</sequence>
<reference key="1">
    <citation type="journal article" date="2008" name="Genome Res.">
        <title>Comparative genome analysis of Salmonella enteritidis PT4 and Salmonella gallinarum 287/91 provides insights into evolutionary and host adaptation pathways.</title>
        <authorList>
            <person name="Thomson N.R."/>
            <person name="Clayton D.J."/>
            <person name="Windhorst D."/>
            <person name="Vernikos G."/>
            <person name="Davidson S."/>
            <person name="Churcher C."/>
            <person name="Quail M.A."/>
            <person name="Stevens M."/>
            <person name="Jones M.A."/>
            <person name="Watson M."/>
            <person name="Barron A."/>
            <person name="Layton A."/>
            <person name="Pickard D."/>
            <person name="Kingsley R.A."/>
            <person name="Bignell A."/>
            <person name="Clark L."/>
            <person name="Harris B."/>
            <person name="Ormond D."/>
            <person name="Abdellah Z."/>
            <person name="Brooks K."/>
            <person name="Cherevach I."/>
            <person name="Chillingworth T."/>
            <person name="Woodward J."/>
            <person name="Norberczak H."/>
            <person name="Lord A."/>
            <person name="Arrowsmith C."/>
            <person name="Jagels K."/>
            <person name="Moule S."/>
            <person name="Mungall K."/>
            <person name="Saunders M."/>
            <person name="Whitehead S."/>
            <person name="Chabalgoity J.A."/>
            <person name="Maskell D."/>
            <person name="Humphreys T."/>
            <person name="Roberts M."/>
            <person name="Barrow P.A."/>
            <person name="Dougan G."/>
            <person name="Parkhill J."/>
        </authorList>
    </citation>
    <scope>NUCLEOTIDE SEQUENCE [LARGE SCALE GENOMIC DNA]</scope>
    <source>
        <strain>P125109</strain>
    </source>
</reference>
<organism>
    <name type="scientific">Salmonella enteritidis PT4 (strain P125109)</name>
    <dbReference type="NCBI Taxonomy" id="550537"/>
    <lineage>
        <taxon>Bacteria</taxon>
        <taxon>Pseudomonadati</taxon>
        <taxon>Pseudomonadota</taxon>
        <taxon>Gammaproteobacteria</taxon>
        <taxon>Enterobacterales</taxon>
        <taxon>Enterobacteriaceae</taxon>
        <taxon>Salmonella</taxon>
    </lineage>
</organism>
<proteinExistence type="inferred from homology"/>
<dbReference type="EC" id="4.1.2.40" evidence="1"/>
<dbReference type="EMBL" id="AM933172">
    <property type="protein sequence ID" value="CAR34667.1"/>
    <property type="molecule type" value="Genomic_DNA"/>
</dbReference>
<dbReference type="RefSeq" id="WP_000469979.1">
    <property type="nucleotide sequence ID" value="NC_011294.1"/>
</dbReference>
<dbReference type="SMR" id="B5QZS8"/>
<dbReference type="KEGG" id="set:SEN3091"/>
<dbReference type="HOGENOM" id="CLU_040088_0_1_6"/>
<dbReference type="UniPathway" id="UPA00704">
    <property type="reaction ID" value="UER00716"/>
</dbReference>
<dbReference type="Proteomes" id="UP000000613">
    <property type="component" value="Chromosome"/>
</dbReference>
<dbReference type="GO" id="GO:0005829">
    <property type="term" value="C:cytosol"/>
    <property type="evidence" value="ECO:0007669"/>
    <property type="project" value="TreeGrafter"/>
</dbReference>
<dbReference type="GO" id="GO:0009025">
    <property type="term" value="F:tagatose-bisphosphate aldolase activity"/>
    <property type="evidence" value="ECO:0007669"/>
    <property type="project" value="UniProtKB-UniRule"/>
</dbReference>
<dbReference type="GO" id="GO:0008270">
    <property type="term" value="F:zinc ion binding"/>
    <property type="evidence" value="ECO:0007669"/>
    <property type="project" value="UniProtKB-UniRule"/>
</dbReference>
<dbReference type="GO" id="GO:2001059">
    <property type="term" value="P:D-tagatose 6-phosphate catabolic process"/>
    <property type="evidence" value="ECO:0007669"/>
    <property type="project" value="UniProtKB-UniRule"/>
</dbReference>
<dbReference type="GO" id="GO:0019404">
    <property type="term" value="P:galactitol catabolic process"/>
    <property type="evidence" value="ECO:0007669"/>
    <property type="project" value="InterPro"/>
</dbReference>
<dbReference type="CDD" id="cd00947">
    <property type="entry name" value="TBP_aldolase_IIB"/>
    <property type="match status" value="1"/>
</dbReference>
<dbReference type="FunFam" id="3.20.20.70:FF:000043">
    <property type="entry name" value="D-tagatose-1,6-bisphosphate aldolase subunit GatY"/>
    <property type="match status" value="1"/>
</dbReference>
<dbReference type="Gene3D" id="3.20.20.70">
    <property type="entry name" value="Aldolase class I"/>
    <property type="match status" value="1"/>
</dbReference>
<dbReference type="HAMAP" id="MF_01294">
    <property type="entry name" value="TagBP_aldolase_GatY"/>
    <property type="match status" value="1"/>
</dbReference>
<dbReference type="InterPro" id="IPR013785">
    <property type="entry name" value="Aldolase_TIM"/>
</dbReference>
<dbReference type="InterPro" id="IPR050246">
    <property type="entry name" value="Class_II_FBP_aldolase"/>
</dbReference>
<dbReference type="InterPro" id="IPR000771">
    <property type="entry name" value="FBA_II"/>
</dbReference>
<dbReference type="InterPro" id="IPR011288">
    <property type="entry name" value="TagBP_ald_KbaY/GatY"/>
</dbReference>
<dbReference type="InterPro" id="IPR023955">
    <property type="entry name" value="TagBP_aldolase_GatY"/>
</dbReference>
<dbReference type="NCBIfam" id="TIGR00167">
    <property type="entry name" value="cbbA"/>
    <property type="match status" value="1"/>
</dbReference>
<dbReference type="NCBIfam" id="NF006626">
    <property type="entry name" value="PRK09195.1"/>
    <property type="match status" value="1"/>
</dbReference>
<dbReference type="NCBIfam" id="NF009374">
    <property type="entry name" value="PRK12737.1"/>
    <property type="match status" value="1"/>
</dbReference>
<dbReference type="NCBIfam" id="TIGR01858">
    <property type="entry name" value="tag_bisphos_ald"/>
    <property type="match status" value="1"/>
</dbReference>
<dbReference type="PANTHER" id="PTHR30304">
    <property type="entry name" value="D-TAGATOSE-1,6-BISPHOSPHATE ALDOLASE"/>
    <property type="match status" value="1"/>
</dbReference>
<dbReference type="PANTHER" id="PTHR30304:SF0">
    <property type="entry name" value="D-TAGATOSE-1,6-BISPHOSPHATE ALDOLASE SUBUNIT GATY-RELATED"/>
    <property type="match status" value="1"/>
</dbReference>
<dbReference type="Pfam" id="PF01116">
    <property type="entry name" value="F_bP_aldolase"/>
    <property type="match status" value="1"/>
</dbReference>
<dbReference type="PIRSF" id="PIRSF001359">
    <property type="entry name" value="F_bP_aldolase_II"/>
    <property type="match status" value="1"/>
</dbReference>
<dbReference type="SUPFAM" id="SSF51569">
    <property type="entry name" value="Aldolase"/>
    <property type="match status" value="1"/>
</dbReference>
<dbReference type="PROSITE" id="PS00806">
    <property type="entry name" value="ALDOLASE_CLASS_II_2"/>
    <property type="match status" value="1"/>
</dbReference>
<keyword id="KW-0298">Galactitol metabolism</keyword>
<keyword id="KW-0456">Lyase</keyword>
<keyword id="KW-0479">Metal-binding</keyword>
<keyword id="KW-0862">Zinc</keyword>
<accession>B5QZS8</accession>
<feature type="chain" id="PRO_1000140440" description="D-tagatose-1,6-bisphosphate aldolase subunit GatY">
    <location>
        <begin position="1"/>
        <end position="284"/>
    </location>
</feature>
<feature type="active site" description="Proton donor" evidence="1">
    <location>
        <position position="82"/>
    </location>
</feature>
<feature type="binding site" evidence="1">
    <location>
        <position position="83"/>
    </location>
    <ligand>
        <name>Zn(2+)</name>
        <dbReference type="ChEBI" id="CHEBI:29105"/>
        <note>catalytic</note>
    </ligand>
</feature>
<feature type="binding site" evidence="1">
    <location>
        <position position="180"/>
    </location>
    <ligand>
        <name>Zn(2+)</name>
        <dbReference type="ChEBI" id="CHEBI:29105"/>
        <note>catalytic</note>
    </ligand>
</feature>
<feature type="binding site" evidence="1">
    <location>
        <position position="181"/>
    </location>
    <ligand>
        <name>dihydroxyacetone phosphate</name>
        <dbReference type="ChEBI" id="CHEBI:57642"/>
    </ligand>
</feature>
<feature type="binding site" evidence="1">
    <location>
        <position position="208"/>
    </location>
    <ligand>
        <name>Zn(2+)</name>
        <dbReference type="ChEBI" id="CHEBI:29105"/>
        <note>catalytic</note>
    </ligand>
</feature>
<feature type="binding site" evidence="1">
    <location>
        <begin position="209"/>
        <end position="211"/>
    </location>
    <ligand>
        <name>dihydroxyacetone phosphate</name>
        <dbReference type="ChEBI" id="CHEBI:57642"/>
    </ligand>
</feature>
<feature type="binding site" evidence="1">
    <location>
        <begin position="230"/>
        <end position="233"/>
    </location>
    <ligand>
        <name>dihydroxyacetone phosphate</name>
        <dbReference type="ChEBI" id="CHEBI:57642"/>
    </ligand>
</feature>